<proteinExistence type="inferred from homology"/>
<reference key="1">
    <citation type="journal article" date="2009" name="PLoS ONE">
        <title>Salmonella paratyphi C: genetic divergence from Salmonella choleraesuis and pathogenic convergence with Salmonella typhi.</title>
        <authorList>
            <person name="Liu W.-Q."/>
            <person name="Feng Y."/>
            <person name="Wang Y."/>
            <person name="Zou Q.-H."/>
            <person name="Chen F."/>
            <person name="Guo J.-T."/>
            <person name="Peng Y.-H."/>
            <person name="Jin Y."/>
            <person name="Li Y.-G."/>
            <person name="Hu S.-N."/>
            <person name="Johnston R.N."/>
            <person name="Liu G.-R."/>
            <person name="Liu S.-L."/>
        </authorList>
    </citation>
    <scope>NUCLEOTIDE SEQUENCE [LARGE SCALE GENOMIC DNA]</scope>
    <source>
        <strain>RKS4594</strain>
    </source>
</reference>
<dbReference type="EMBL" id="CP000857">
    <property type="protein sequence ID" value="ACN46021.1"/>
    <property type="molecule type" value="Genomic_DNA"/>
</dbReference>
<dbReference type="RefSeq" id="WP_000431401.1">
    <property type="nucleotide sequence ID" value="NC_012125.1"/>
</dbReference>
<dbReference type="SMR" id="C0Q2Y9"/>
<dbReference type="KEGG" id="sei:SPC_1883"/>
<dbReference type="HOGENOM" id="CLU_113254_0_0_6"/>
<dbReference type="Proteomes" id="UP000001599">
    <property type="component" value="Chromosome"/>
</dbReference>
<dbReference type="GO" id="GO:0005829">
    <property type="term" value="C:cytosol"/>
    <property type="evidence" value="ECO:0007669"/>
    <property type="project" value="TreeGrafter"/>
</dbReference>
<dbReference type="GO" id="GO:0033592">
    <property type="term" value="F:RNA strand annealing activity"/>
    <property type="evidence" value="ECO:0007669"/>
    <property type="project" value="UniProtKB-UniRule"/>
</dbReference>
<dbReference type="GO" id="GO:0034057">
    <property type="term" value="F:RNA strand-exchange activity"/>
    <property type="evidence" value="ECO:0007669"/>
    <property type="project" value="UniProtKB-UniRule"/>
</dbReference>
<dbReference type="GO" id="GO:0010608">
    <property type="term" value="P:post-transcriptional regulation of gene expression"/>
    <property type="evidence" value="ECO:0007669"/>
    <property type="project" value="InterPro"/>
</dbReference>
<dbReference type="FunFam" id="1.10.1710.10:FF:000001">
    <property type="entry name" value="RNA chaperone ProQ"/>
    <property type="match status" value="1"/>
</dbReference>
<dbReference type="Gene3D" id="1.10.1710.10">
    <property type="entry name" value="ProQ/FinO domain"/>
    <property type="match status" value="1"/>
</dbReference>
<dbReference type="HAMAP" id="MF_00749">
    <property type="entry name" value="ProQ"/>
    <property type="match status" value="1"/>
</dbReference>
<dbReference type="InterPro" id="IPR023529">
    <property type="entry name" value="ProQ"/>
</dbReference>
<dbReference type="InterPro" id="IPR016103">
    <property type="entry name" value="ProQ/FinO"/>
</dbReference>
<dbReference type="InterPro" id="IPR036442">
    <property type="entry name" value="ProQ/FinO_sf"/>
</dbReference>
<dbReference type="InterPro" id="IPR035236">
    <property type="entry name" value="ProQ_C"/>
</dbReference>
<dbReference type="NCBIfam" id="NF003434">
    <property type="entry name" value="PRK04950.1"/>
    <property type="match status" value="1"/>
</dbReference>
<dbReference type="PANTHER" id="PTHR38106">
    <property type="entry name" value="RNA CHAPERONE PROQ"/>
    <property type="match status" value="1"/>
</dbReference>
<dbReference type="PANTHER" id="PTHR38106:SF1">
    <property type="entry name" value="RNA CHAPERONE PROQ"/>
    <property type="match status" value="1"/>
</dbReference>
<dbReference type="Pfam" id="PF04352">
    <property type="entry name" value="ProQ"/>
    <property type="match status" value="1"/>
</dbReference>
<dbReference type="Pfam" id="PF17516">
    <property type="entry name" value="ProQ_C"/>
    <property type="match status" value="1"/>
</dbReference>
<dbReference type="SMART" id="SM00945">
    <property type="entry name" value="ProQ"/>
    <property type="match status" value="1"/>
</dbReference>
<dbReference type="SUPFAM" id="SSF48657">
    <property type="entry name" value="FinO-like"/>
    <property type="match status" value="1"/>
</dbReference>
<name>PROQ_SALPC</name>
<sequence>MENQPKLNSSKEVIAFLAERFPHCFSAEGEARPLKIGIFQDLVERVGGEMNLSKTQLRSALRLYTSSWRYLYGVKPGATRVDLDGNPCGELEEQHVEHARKQLEEAKARVQAQRAEQQAKKREAAAAAGEKEDAPRRERKPRPVARRKEGAERKPRADKPTTKAPRAPREEKHTPVSDISVLTVGQSLKVKAGNNAMDATVLEITKDGVRVQLNSGMSLIVRAEHLVF</sequence>
<keyword id="KW-0143">Chaperone</keyword>
<keyword id="KW-0963">Cytoplasm</keyword>
<keyword id="KW-0694">RNA-binding</keyword>
<gene>
    <name evidence="1" type="primary">proQ</name>
    <name type="ordered locus">SPC_1883</name>
</gene>
<organism>
    <name type="scientific">Salmonella paratyphi C (strain RKS4594)</name>
    <dbReference type="NCBI Taxonomy" id="476213"/>
    <lineage>
        <taxon>Bacteria</taxon>
        <taxon>Pseudomonadati</taxon>
        <taxon>Pseudomonadota</taxon>
        <taxon>Gammaproteobacteria</taxon>
        <taxon>Enterobacterales</taxon>
        <taxon>Enterobacteriaceae</taxon>
        <taxon>Salmonella</taxon>
    </lineage>
</organism>
<evidence type="ECO:0000255" key="1">
    <source>
        <dbReference type="HAMAP-Rule" id="MF_00749"/>
    </source>
</evidence>
<evidence type="ECO:0000256" key="2">
    <source>
        <dbReference type="SAM" id="MobiDB-lite"/>
    </source>
</evidence>
<accession>C0Q2Y9</accession>
<protein>
    <recommendedName>
        <fullName evidence="1">RNA chaperone ProQ</fullName>
    </recommendedName>
</protein>
<comment type="function">
    <text evidence="1">RNA chaperone with significant RNA binding, RNA strand exchange and RNA duplexing activities. May regulate ProP activity through an RNA-based, post-transcriptional mechanism.</text>
</comment>
<comment type="subcellular location">
    <subcellularLocation>
        <location evidence="1">Cytoplasm</location>
    </subcellularLocation>
</comment>
<comment type="similarity">
    <text evidence="1">Belongs to the ProQ family.</text>
</comment>
<feature type="chain" id="PRO_1000148345" description="RNA chaperone ProQ">
    <location>
        <begin position="1"/>
        <end position="228"/>
    </location>
</feature>
<feature type="region of interest" description="Disordered" evidence="2">
    <location>
        <begin position="107"/>
        <end position="178"/>
    </location>
</feature>
<feature type="compositionally biased region" description="Basic and acidic residues" evidence="2">
    <location>
        <begin position="117"/>
        <end position="136"/>
    </location>
</feature>
<feature type="compositionally biased region" description="Basic and acidic residues" evidence="2">
    <location>
        <begin position="146"/>
        <end position="175"/>
    </location>
</feature>